<evidence type="ECO:0000250" key="1"/>
<evidence type="ECO:0000269" key="2">
    <source>
    </source>
</evidence>
<evidence type="ECO:0000305" key="3"/>
<organism>
    <name type="scientific">Escherichia coli (strain K12)</name>
    <dbReference type="NCBI Taxonomy" id="83333"/>
    <lineage>
        <taxon>Bacteria</taxon>
        <taxon>Pseudomonadati</taxon>
        <taxon>Pseudomonadota</taxon>
        <taxon>Gammaproteobacteria</taxon>
        <taxon>Enterobacterales</taxon>
        <taxon>Enterobacteriaceae</taxon>
        <taxon>Escherichia</taxon>
    </lineage>
</organism>
<sequence>MDLSLLKALSEADAIASSEQEVRQILLEEADRLQKEVRFDGLGSVLIRLNESTGPKVMICAHMDEVGFMVRSISREGAIDVLPVGNVRMAARQLQPVRITTREECKIPGLLDGDRQGNDVSAMRVDIGARSYDEVMQAGIRPGDRVTFDTTFQVLPHQRVMGKAFDDRLGCYLLVTLLRELHDAELPAEVWLVASSSEEVGLRGGQTATRAVSPDVAIVLDTACWAKNFDYGAANHRQIGNGPMLVLSDKSLIAPPKLTAWVETVAAEIGVPLQADMFSNGGTDGGAVHLTGTGVPTVVMGPATRHGHCAASIADCRDILQMQQLLSALIQRLTRETVVQLTDFR</sequence>
<accession>P77585</accession>
<reference key="1">
    <citation type="journal article" date="1997" name="DNA Res.">
        <title>Construction of a contiguous 874-kb sequence of the Escherichia coli-K12 genome corresponding to 50.0-68.8 min on the linkage map and analysis of its sequence features.</title>
        <authorList>
            <person name="Yamamoto Y."/>
            <person name="Aiba H."/>
            <person name="Baba T."/>
            <person name="Hayashi K."/>
            <person name="Inada T."/>
            <person name="Isono K."/>
            <person name="Itoh T."/>
            <person name="Kimura S."/>
            <person name="Kitagawa M."/>
            <person name="Makino K."/>
            <person name="Miki T."/>
            <person name="Mitsuhashi N."/>
            <person name="Mizobuchi K."/>
            <person name="Mori H."/>
            <person name="Nakade S."/>
            <person name="Nakamura Y."/>
            <person name="Nashimoto H."/>
            <person name="Oshima T."/>
            <person name="Oyama S."/>
            <person name="Saito N."/>
            <person name="Sampei G."/>
            <person name="Satoh Y."/>
            <person name="Sivasundaram S."/>
            <person name="Tagami H."/>
            <person name="Takahashi H."/>
            <person name="Takeda J."/>
            <person name="Takemoto K."/>
            <person name="Uehara K."/>
            <person name="Wada C."/>
            <person name="Yamagata S."/>
            <person name="Horiuchi T."/>
        </authorList>
    </citation>
    <scope>NUCLEOTIDE SEQUENCE [LARGE SCALE GENOMIC DNA]</scope>
    <source>
        <strain>K12 / W3110 / ATCC 27325 / DSM 5911</strain>
    </source>
</reference>
<reference key="2">
    <citation type="journal article" date="1997" name="Science">
        <title>The complete genome sequence of Escherichia coli K-12.</title>
        <authorList>
            <person name="Blattner F.R."/>
            <person name="Plunkett G. III"/>
            <person name="Bloch C.A."/>
            <person name="Perna N.T."/>
            <person name="Burland V."/>
            <person name="Riley M."/>
            <person name="Collado-Vides J."/>
            <person name="Glasner J.D."/>
            <person name="Rode C.K."/>
            <person name="Mayhew G.F."/>
            <person name="Gregor J."/>
            <person name="Davis N.W."/>
            <person name="Kirkpatrick H.A."/>
            <person name="Goeden M.A."/>
            <person name="Rose D.J."/>
            <person name="Mau B."/>
            <person name="Shao Y."/>
        </authorList>
    </citation>
    <scope>NUCLEOTIDE SEQUENCE [LARGE SCALE GENOMIC DNA]</scope>
    <source>
        <strain>K12 / MG1655 / ATCC 47076</strain>
    </source>
</reference>
<reference key="3">
    <citation type="journal article" date="2006" name="Mol. Syst. Biol.">
        <title>Highly accurate genome sequences of Escherichia coli K-12 strains MG1655 and W3110.</title>
        <authorList>
            <person name="Hayashi K."/>
            <person name="Morooka N."/>
            <person name="Yamamoto Y."/>
            <person name="Fujita K."/>
            <person name="Isono K."/>
            <person name="Choi S."/>
            <person name="Ohtsubo E."/>
            <person name="Baba T."/>
            <person name="Wanner B.L."/>
            <person name="Mori H."/>
            <person name="Horiuchi T."/>
        </authorList>
    </citation>
    <scope>NUCLEOTIDE SEQUENCE [LARGE SCALE GENOMIC DNA]</scope>
    <source>
        <strain>K12 / W3110 / ATCC 27325 / DSM 5911</strain>
    </source>
</reference>
<reference key="4">
    <citation type="journal article" date="2005" name="J. Bacteriol.">
        <title>Characterization of two new aminopeptidases in Escherichia coli.</title>
        <authorList>
            <person name="Zheng Y."/>
            <person name="Roberts R.J."/>
            <person name="Kasif S."/>
            <person name="Guan C."/>
        </authorList>
    </citation>
    <scope>FUNCTION AS AN AMINOPEPTIDASE</scope>
    <scope>CATALYTIC ACTIVITY</scope>
    <scope>SUBSTRATE SPECIFICITY</scope>
    <scope>COFACTOR</scope>
</reference>
<comment type="function">
    <text evidence="2">Has a broad aminopeptidase activity on non-blocked peptides by progressively cleaving amino acids off the peptide substrate. Aminopeptidase activity stops at the residue before the first proline in the peptide. Cannot cleave when proline is the first N-terminal residue.</text>
</comment>
<comment type="cofactor">
    <cofactor evidence="2 3">
        <name>Co(2+)</name>
        <dbReference type="ChEBI" id="CHEBI:48828"/>
    </cofactor>
    <cofactor evidence="2 3">
        <name>Ni(2+)</name>
        <dbReference type="ChEBI" id="CHEBI:49786"/>
    </cofactor>
    <cofactor evidence="2 3">
        <name>Mn(2+)</name>
        <dbReference type="ChEBI" id="CHEBI:29035"/>
    </cofactor>
    <cofactor evidence="2 3">
        <name>Cu(2+)</name>
        <dbReference type="ChEBI" id="CHEBI:29036"/>
    </cofactor>
    <text evidence="2 3">Binds 2 divalent metal cations per subunit. Can use cobalt, and to a lesser extent, nickel, manganese or copper.</text>
</comment>
<comment type="similarity">
    <text evidence="3">Belongs to the peptidase M42 family.</text>
</comment>
<keyword id="KW-0031">Aminopeptidase</keyword>
<keyword id="KW-0170">Cobalt</keyword>
<keyword id="KW-0378">Hydrolase</keyword>
<keyword id="KW-0479">Metal-binding</keyword>
<keyword id="KW-0482">Metalloprotease</keyword>
<keyword id="KW-0645">Protease</keyword>
<keyword id="KW-1185">Reference proteome</keyword>
<name>YPDE_ECOLI</name>
<dbReference type="EC" id="3.4.11.-"/>
<dbReference type="EMBL" id="U00096">
    <property type="protein sequence ID" value="AAC75443.1"/>
    <property type="molecule type" value="Genomic_DNA"/>
</dbReference>
<dbReference type="EMBL" id="AP009048">
    <property type="protein sequence ID" value="BAA16254.1"/>
    <property type="molecule type" value="Genomic_DNA"/>
</dbReference>
<dbReference type="PIR" id="E65012">
    <property type="entry name" value="E65012"/>
</dbReference>
<dbReference type="RefSeq" id="NP_416885.1">
    <property type="nucleotide sequence ID" value="NC_000913.3"/>
</dbReference>
<dbReference type="RefSeq" id="WP_000366028.1">
    <property type="nucleotide sequence ID" value="NZ_LN832404.1"/>
</dbReference>
<dbReference type="SMR" id="P77585"/>
<dbReference type="BioGRID" id="4260561">
    <property type="interactions" value="15"/>
</dbReference>
<dbReference type="BioGRID" id="851189">
    <property type="interactions" value="4"/>
</dbReference>
<dbReference type="DIP" id="DIP-48263N"/>
<dbReference type="FunCoup" id="P77585">
    <property type="interactions" value="41"/>
</dbReference>
<dbReference type="IntAct" id="P77585">
    <property type="interactions" value="8"/>
</dbReference>
<dbReference type="STRING" id="511145.b2384"/>
<dbReference type="MEROPS" id="M42.008"/>
<dbReference type="PaxDb" id="511145-b2384"/>
<dbReference type="EnsemblBacteria" id="AAC75443">
    <property type="protein sequence ID" value="AAC75443"/>
    <property type="gene ID" value="b2384"/>
</dbReference>
<dbReference type="GeneID" id="946848"/>
<dbReference type="KEGG" id="ecj:JW2381"/>
<dbReference type="KEGG" id="eco:b2384"/>
<dbReference type="KEGG" id="ecoc:C3026_13255"/>
<dbReference type="PATRIC" id="fig|1411691.4.peg.4344"/>
<dbReference type="EchoBASE" id="EB3904"/>
<dbReference type="eggNOG" id="COG1363">
    <property type="taxonomic scope" value="Bacteria"/>
</dbReference>
<dbReference type="HOGENOM" id="CLU_047249_0_2_6"/>
<dbReference type="InParanoid" id="P77585"/>
<dbReference type="OMA" id="SDHQIAP"/>
<dbReference type="OrthoDB" id="9772053at2"/>
<dbReference type="PhylomeDB" id="P77585"/>
<dbReference type="BioCyc" id="EcoCyc:G7247-MONOMER"/>
<dbReference type="BioCyc" id="MetaCyc:G7247-MONOMER"/>
<dbReference type="PRO" id="PR:P77585"/>
<dbReference type="Proteomes" id="UP000000625">
    <property type="component" value="Chromosome"/>
</dbReference>
<dbReference type="GO" id="GO:0004177">
    <property type="term" value="F:aminopeptidase activity"/>
    <property type="evidence" value="ECO:0000314"/>
    <property type="project" value="EcoliWiki"/>
</dbReference>
<dbReference type="GO" id="GO:0046872">
    <property type="term" value="F:metal ion binding"/>
    <property type="evidence" value="ECO:0007669"/>
    <property type="project" value="UniProtKB-KW"/>
</dbReference>
<dbReference type="GO" id="GO:0070006">
    <property type="term" value="F:metalloaminopeptidase activity"/>
    <property type="evidence" value="ECO:0000314"/>
    <property type="project" value="EcoCyc"/>
</dbReference>
<dbReference type="GO" id="GO:0008237">
    <property type="term" value="F:metallopeptidase activity"/>
    <property type="evidence" value="ECO:0000314"/>
    <property type="project" value="EcoliWiki"/>
</dbReference>
<dbReference type="GO" id="GO:0006508">
    <property type="term" value="P:proteolysis"/>
    <property type="evidence" value="ECO:0007669"/>
    <property type="project" value="UniProtKB-KW"/>
</dbReference>
<dbReference type="CDD" id="cd05638">
    <property type="entry name" value="M42"/>
    <property type="match status" value="1"/>
</dbReference>
<dbReference type="Gene3D" id="2.40.30.40">
    <property type="entry name" value="Peptidase M42, domain 2"/>
    <property type="match status" value="1"/>
</dbReference>
<dbReference type="Gene3D" id="3.40.630.10">
    <property type="entry name" value="Zn peptidases"/>
    <property type="match status" value="1"/>
</dbReference>
<dbReference type="InterPro" id="IPR008007">
    <property type="entry name" value="Peptidase_M42"/>
</dbReference>
<dbReference type="InterPro" id="IPR051464">
    <property type="entry name" value="Peptidase_M42_aminopept"/>
</dbReference>
<dbReference type="InterPro" id="IPR023367">
    <property type="entry name" value="Peptidase_M42_dom2"/>
</dbReference>
<dbReference type="NCBIfam" id="NF007421">
    <property type="entry name" value="PRK09961.1"/>
    <property type="match status" value="1"/>
</dbReference>
<dbReference type="PANTHER" id="PTHR32481">
    <property type="entry name" value="AMINOPEPTIDASE"/>
    <property type="match status" value="1"/>
</dbReference>
<dbReference type="PANTHER" id="PTHR32481:SF0">
    <property type="entry name" value="AMINOPEPTIDASE YPDE-RELATED"/>
    <property type="match status" value="1"/>
</dbReference>
<dbReference type="Pfam" id="PF05343">
    <property type="entry name" value="Peptidase_M42"/>
    <property type="match status" value="1"/>
</dbReference>
<dbReference type="PIRSF" id="PIRSF001123">
    <property type="entry name" value="PepA_GA"/>
    <property type="match status" value="1"/>
</dbReference>
<dbReference type="SUPFAM" id="SSF101821">
    <property type="entry name" value="Aminopeptidase/glucanase lid domain"/>
    <property type="match status" value="1"/>
</dbReference>
<dbReference type="SUPFAM" id="SSF53187">
    <property type="entry name" value="Zn-dependent exopeptidases"/>
    <property type="match status" value="1"/>
</dbReference>
<feature type="chain" id="PRO_0000071659" description="Aminopeptidase YpdE">
    <location>
        <begin position="1"/>
        <end position="345"/>
    </location>
</feature>
<feature type="active site" description="Proton acceptor" evidence="1">
    <location>
        <position position="198"/>
    </location>
</feature>
<feature type="binding site" evidence="1">
    <location>
        <position position="62"/>
    </location>
    <ligand>
        <name>a divalent metal cation</name>
        <dbReference type="ChEBI" id="CHEBI:60240"/>
        <label>1</label>
    </ligand>
</feature>
<feature type="binding site" evidence="1">
    <location>
        <position position="166"/>
    </location>
    <ligand>
        <name>a divalent metal cation</name>
        <dbReference type="ChEBI" id="CHEBI:60240"/>
        <label>1</label>
    </ligand>
</feature>
<feature type="binding site" evidence="1">
    <location>
        <position position="166"/>
    </location>
    <ligand>
        <name>a divalent metal cation</name>
        <dbReference type="ChEBI" id="CHEBI:60240"/>
        <label>2</label>
    </ligand>
</feature>
<feature type="binding site" evidence="1">
    <location>
        <position position="199"/>
    </location>
    <ligand>
        <name>a divalent metal cation</name>
        <dbReference type="ChEBI" id="CHEBI:60240"/>
        <label>2</label>
    </ligand>
</feature>
<feature type="binding site" evidence="1">
    <location>
        <position position="221"/>
    </location>
    <ligand>
        <name>a divalent metal cation</name>
        <dbReference type="ChEBI" id="CHEBI:60240"/>
        <label>1</label>
    </ligand>
</feature>
<feature type="binding site" evidence="1">
    <location>
        <position position="308"/>
    </location>
    <ligand>
        <name>a divalent metal cation</name>
        <dbReference type="ChEBI" id="CHEBI:60240"/>
        <label>2</label>
    </ligand>
</feature>
<gene>
    <name type="primary">ypdE</name>
    <name type="ordered locus">b2384</name>
    <name type="ordered locus">JW2381</name>
</gene>
<protein>
    <recommendedName>
        <fullName>Aminopeptidase YpdE</fullName>
        <ecNumber>3.4.11.-</ecNumber>
    </recommendedName>
</protein>
<proteinExistence type="evidence at protein level"/>